<sequence length="189" mass="21611">MGKAKKTRKFGLVKRTLNTKKDQRLKKNQENIKTKEDPELTRNIPQVSSALFFQYNQAIKPPYQVLIDTNFINFSIQKKVDIVRGMMDCLLAKCNPLITDCVMAELEKLGPKYRIALKLARDPRIKRLSCSHKGTYADDCLVHRVLQHKCYIVATNDAGLKQRIRKIPGIPLMSVGGHAYVIEKLPDVF</sequence>
<protein>
    <recommendedName>
        <fullName>rRNA-processing protein FCF1</fullName>
    </recommendedName>
    <alternativeName>
        <fullName>FAF1-copurifying factor 1</fullName>
    </alternativeName>
</protein>
<dbReference type="EMBL" id="U51032">
    <property type="protein sequence ID" value="AAB64775.1"/>
    <property type="molecule type" value="Genomic_DNA"/>
</dbReference>
<dbReference type="EMBL" id="AY557728">
    <property type="protein sequence ID" value="AAS56054.1"/>
    <property type="molecule type" value="Genomic_DNA"/>
</dbReference>
<dbReference type="EMBL" id="BK006938">
    <property type="protein sequence ID" value="DAA12181.1"/>
    <property type="molecule type" value="Genomic_DNA"/>
</dbReference>
<dbReference type="PIR" id="S70104">
    <property type="entry name" value="S70104"/>
</dbReference>
<dbReference type="RefSeq" id="NP_010626.1">
    <property type="nucleotide sequence ID" value="NM_001180647.1"/>
</dbReference>
<dbReference type="PDB" id="5WLC">
    <property type="method" value="EM"/>
    <property type="resolution" value="3.80 A"/>
    <property type="chains" value="SL=1-189"/>
</dbReference>
<dbReference type="PDB" id="5WYJ">
    <property type="method" value="EM"/>
    <property type="resolution" value="8.70 A"/>
    <property type="chains" value="U4=1-189"/>
</dbReference>
<dbReference type="PDB" id="5WYK">
    <property type="method" value="EM"/>
    <property type="resolution" value="4.50 A"/>
    <property type="chains" value="U4=1-189"/>
</dbReference>
<dbReference type="PDB" id="6KE6">
    <property type="method" value="EM"/>
    <property type="resolution" value="3.40 A"/>
    <property type="chains" value="5K=1-189"/>
</dbReference>
<dbReference type="PDB" id="6LQP">
    <property type="method" value="EM"/>
    <property type="resolution" value="3.20 A"/>
    <property type="chains" value="5K=1-189"/>
</dbReference>
<dbReference type="PDB" id="6LQQ">
    <property type="method" value="EM"/>
    <property type="resolution" value="4.10 A"/>
    <property type="chains" value="5K=1-189"/>
</dbReference>
<dbReference type="PDB" id="6LQR">
    <property type="method" value="EM"/>
    <property type="resolution" value="8.60 A"/>
    <property type="chains" value="5K=1-189"/>
</dbReference>
<dbReference type="PDB" id="6LQS">
    <property type="method" value="EM"/>
    <property type="resolution" value="3.80 A"/>
    <property type="chains" value="5K=1-189"/>
</dbReference>
<dbReference type="PDB" id="6LQT">
    <property type="method" value="EM"/>
    <property type="resolution" value="4.90 A"/>
    <property type="chains" value="5K=1-189"/>
</dbReference>
<dbReference type="PDB" id="6LQU">
    <property type="method" value="EM"/>
    <property type="resolution" value="3.70 A"/>
    <property type="chains" value="5K=1-189"/>
</dbReference>
<dbReference type="PDB" id="6LQV">
    <property type="method" value="EM"/>
    <property type="resolution" value="4.80 A"/>
    <property type="chains" value="5K=1-189"/>
</dbReference>
<dbReference type="PDB" id="6ND4">
    <property type="method" value="EM"/>
    <property type="resolution" value="4.30 A"/>
    <property type="chains" value="l=1-189"/>
</dbReference>
<dbReference type="PDB" id="6ZQA">
    <property type="method" value="EM"/>
    <property type="resolution" value="4.40 A"/>
    <property type="chains" value="UX=1-189"/>
</dbReference>
<dbReference type="PDB" id="6ZQB">
    <property type="method" value="EM"/>
    <property type="resolution" value="3.90 A"/>
    <property type="chains" value="UX=1-189"/>
</dbReference>
<dbReference type="PDB" id="6ZQC">
    <property type="method" value="EM"/>
    <property type="resolution" value="3.80 A"/>
    <property type="chains" value="UX=1-189"/>
</dbReference>
<dbReference type="PDB" id="6ZQD">
    <property type="method" value="EM"/>
    <property type="resolution" value="3.80 A"/>
    <property type="chains" value="UX=1-189"/>
</dbReference>
<dbReference type="PDB" id="6ZQE">
    <property type="method" value="EM"/>
    <property type="resolution" value="7.10 A"/>
    <property type="chains" value="UX=1-189"/>
</dbReference>
<dbReference type="PDB" id="6ZQG">
    <property type="method" value="EM"/>
    <property type="resolution" value="3.50 A"/>
    <property type="chains" value="UX=1-189"/>
</dbReference>
<dbReference type="PDB" id="7AJT">
    <property type="method" value="EM"/>
    <property type="resolution" value="4.60 A"/>
    <property type="chains" value="UX=1-189"/>
</dbReference>
<dbReference type="PDB" id="7AJU">
    <property type="method" value="EM"/>
    <property type="resolution" value="3.80 A"/>
    <property type="chains" value="UX=1-189"/>
</dbReference>
<dbReference type="PDB" id="7D4I">
    <property type="method" value="EM"/>
    <property type="resolution" value="4.00 A"/>
    <property type="chains" value="5K=1-189"/>
</dbReference>
<dbReference type="PDB" id="7D5S">
    <property type="method" value="EM"/>
    <property type="resolution" value="4.60 A"/>
    <property type="chains" value="5K=1-189"/>
</dbReference>
<dbReference type="PDB" id="7D5T">
    <property type="method" value="EM"/>
    <property type="resolution" value="6.00 A"/>
    <property type="chains" value="5K=1-189"/>
</dbReference>
<dbReference type="PDB" id="7D63">
    <property type="method" value="EM"/>
    <property type="resolution" value="12.30 A"/>
    <property type="chains" value="5K=1-189"/>
</dbReference>
<dbReference type="PDB" id="7SUK">
    <property type="method" value="EM"/>
    <property type="resolution" value="3.99 A"/>
    <property type="chains" value="SL=7-189"/>
</dbReference>
<dbReference type="PDBsum" id="5WLC"/>
<dbReference type="PDBsum" id="5WYJ"/>
<dbReference type="PDBsum" id="5WYK"/>
<dbReference type="PDBsum" id="6KE6"/>
<dbReference type="PDBsum" id="6LQP"/>
<dbReference type="PDBsum" id="6LQQ"/>
<dbReference type="PDBsum" id="6LQR"/>
<dbReference type="PDBsum" id="6LQS"/>
<dbReference type="PDBsum" id="6LQT"/>
<dbReference type="PDBsum" id="6LQU"/>
<dbReference type="PDBsum" id="6LQV"/>
<dbReference type="PDBsum" id="6ND4"/>
<dbReference type="PDBsum" id="6ZQA"/>
<dbReference type="PDBsum" id="6ZQB"/>
<dbReference type="PDBsum" id="6ZQC"/>
<dbReference type="PDBsum" id="6ZQD"/>
<dbReference type="PDBsum" id="6ZQE"/>
<dbReference type="PDBsum" id="6ZQG"/>
<dbReference type="PDBsum" id="7AJT"/>
<dbReference type="PDBsum" id="7AJU"/>
<dbReference type="PDBsum" id="7D4I"/>
<dbReference type="PDBsum" id="7D5S"/>
<dbReference type="PDBsum" id="7D5T"/>
<dbReference type="PDBsum" id="7D63"/>
<dbReference type="PDBsum" id="7SUK"/>
<dbReference type="EMDB" id="EMD-0441"/>
<dbReference type="EMDB" id="EMD-0949"/>
<dbReference type="EMDB" id="EMD-0950"/>
<dbReference type="EMDB" id="EMD-0951"/>
<dbReference type="EMDB" id="EMD-0952"/>
<dbReference type="EMDB" id="EMD-0953"/>
<dbReference type="EMDB" id="EMD-0954"/>
<dbReference type="EMDB" id="EMD-0955"/>
<dbReference type="EMDB" id="EMD-11357"/>
<dbReference type="EMDB" id="EMD-11358"/>
<dbReference type="EMDB" id="EMD-11359"/>
<dbReference type="EMDB" id="EMD-11360"/>
<dbReference type="EMDB" id="EMD-11361"/>
<dbReference type="EMDB" id="EMD-11363"/>
<dbReference type="EMDB" id="EMD-11807"/>
<dbReference type="EMDB" id="EMD-11808"/>
<dbReference type="EMDB" id="EMD-25441"/>
<dbReference type="EMDB" id="EMD-30574"/>
<dbReference type="EMDB" id="EMD-30584"/>
<dbReference type="EMDB" id="EMD-30585"/>
<dbReference type="EMDB" id="EMD-30588"/>
<dbReference type="EMDB" id="EMD-6695"/>
<dbReference type="EMDB" id="EMD-6696"/>
<dbReference type="EMDB" id="EMD-8859"/>
<dbReference type="EMDB" id="EMD-9964"/>
<dbReference type="SMR" id="Q05498"/>
<dbReference type="BioGRID" id="32396">
    <property type="interactions" value="303"/>
</dbReference>
<dbReference type="ComplexPortal" id="CPX-1604">
    <property type="entry name" value="Small ribosomal subunit processome"/>
</dbReference>
<dbReference type="DIP" id="DIP-6627N"/>
<dbReference type="FunCoup" id="Q05498">
    <property type="interactions" value="1134"/>
</dbReference>
<dbReference type="IntAct" id="Q05498">
    <property type="interactions" value="81"/>
</dbReference>
<dbReference type="MINT" id="Q05498"/>
<dbReference type="STRING" id="4932.YDR339C"/>
<dbReference type="iPTMnet" id="Q05498"/>
<dbReference type="PaxDb" id="4932-YDR339C"/>
<dbReference type="PeptideAtlas" id="Q05498"/>
<dbReference type="TopDownProteomics" id="Q05498"/>
<dbReference type="EnsemblFungi" id="YDR339C_mRNA">
    <property type="protein sequence ID" value="YDR339C"/>
    <property type="gene ID" value="YDR339C"/>
</dbReference>
<dbReference type="GeneID" id="851939"/>
<dbReference type="KEGG" id="sce:YDR339C"/>
<dbReference type="AGR" id="SGD:S000002747"/>
<dbReference type="SGD" id="S000002747">
    <property type="gene designation" value="FCF1"/>
</dbReference>
<dbReference type="VEuPathDB" id="FungiDB:YDR339C"/>
<dbReference type="eggNOG" id="KOG3165">
    <property type="taxonomic scope" value="Eukaryota"/>
</dbReference>
<dbReference type="GeneTree" id="ENSGT00940000153117"/>
<dbReference type="HOGENOM" id="CLU_081098_0_1_1"/>
<dbReference type="InParanoid" id="Q05498"/>
<dbReference type="OMA" id="GMMDCLL"/>
<dbReference type="OrthoDB" id="76105at2759"/>
<dbReference type="BioCyc" id="YEAST:G3O-29895-MONOMER"/>
<dbReference type="Reactome" id="R-SCE-6791226">
    <property type="pathway name" value="Major pathway of rRNA processing in the nucleolus and cytosol"/>
</dbReference>
<dbReference type="BioGRID-ORCS" id="851939">
    <property type="hits" value="2 hits in 10 CRISPR screens"/>
</dbReference>
<dbReference type="PRO" id="PR:Q05498"/>
<dbReference type="Proteomes" id="UP000002311">
    <property type="component" value="Chromosome IV"/>
</dbReference>
<dbReference type="RNAct" id="Q05498">
    <property type="molecule type" value="protein"/>
</dbReference>
<dbReference type="GO" id="GO:0005730">
    <property type="term" value="C:nucleolus"/>
    <property type="evidence" value="ECO:0000314"/>
    <property type="project" value="SGD"/>
</dbReference>
<dbReference type="GO" id="GO:0005654">
    <property type="term" value="C:nucleoplasm"/>
    <property type="evidence" value="ECO:0000304"/>
    <property type="project" value="Reactome"/>
</dbReference>
<dbReference type="GO" id="GO:0032040">
    <property type="term" value="C:small-subunit processome"/>
    <property type="evidence" value="ECO:0000314"/>
    <property type="project" value="SGD"/>
</dbReference>
<dbReference type="GO" id="GO:0004521">
    <property type="term" value="F:RNA endonuclease activity"/>
    <property type="evidence" value="ECO:0000314"/>
    <property type="project" value="SGD"/>
</dbReference>
<dbReference type="GO" id="GO:0000480">
    <property type="term" value="P:endonucleolytic cleavage in 5'-ETS of tricistronic rRNA transcript (SSU-rRNA, 5.8S rRNA, LSU-rRNA)"/>
    <property type="evidence" value="ECO:0000315"/>
    <property type="project" value="SGD"/>
</dbReference>
<dbReference type="GO" id="GO:0000447">
    <property type="term" value="P:endonucleolytic cleavage in ITS1 to separate SSU-rRNA from 5.8S rRNA and LSU-rRNA from tricistronic rRNA transcript (SSU-rRNA, 5.8S rRNA, LSU-rRNA)"/>
    <property type="evidence" value="ECO:0000315"/>
    <property type="project" value="SGD"/>
</dbReference>
<dbReference type="GO" id="GO:0000472">
    <property type="term" value="P:endonucleolytic cleavage to generate mature 5'-end of SSU-rRNA from (SSU-rRNA, 5.8S rRNA, LSU-rRNA)"/>
    <property type="evidence" value="ECO:0000315"/>
    <property type="project" value="SGD"/>
</dbReference>
<dbReference type="GO" id="GO:0030490">
    <property type="term" value="P:maturation of SSU-rRNA"/>
    <property type="evidence" value="ECO:0000303"/>
    <property type="project" value="ComplexPortal"/>
</dbReference>
<dbReference type="CDD" id="cd09864">
    <property type="entry name" value="PIN_Fcf1-like"/>
    <property type="match status" value="1"/>
</dbReference>
<dbReference type="FunFam" id="3.40.50.1010:FF:000004">
    <property type="entry name" value="rRNA-processing protein FCF1 homolog"/>
    <property type="match status" value="1"/>
</dbReference>
<dbReference type="Gene3D" id="3.40.50.1010">
    <property type="entry name" value="5'-nuclease"/>
    <property type="match status" value="1"/>
</dbReference>
<dbReference type="InterPro" id="IPR006984">
    <property type="entry name" value="Fcf1/Utp23"/>
</dbReference>
<dbReference type="InterPro" id="IPR037503">
    <property type="entry name" value="Fcf1_PIN"/>
</dbReference>
<dbReference type="InterPro" id="IPR029060">
    <property type="entry name" value="PIN-like_dom_sf"/>
</dbReference>
<dbReference type="InterPro" id="IPR002716">
    <property type="entry name" value="PIN_dom"/>
</dbReference>
<dbReference type="PANTHER" id="PTHR12416">
    <property type="entry name" value="RRNA-PROCESSING PROTEIN UTP23 HOMOLOG"/>
    <property type="match status" value="1"/>
</dbReference>
<dbReference type="Pfam" id="PF04900">
    <property type="entry name" value="Fcf1"/>
    <property type="match status" value="1"/>
</dbReference>
<dbReference type="SMART" id="SM00670">
    <property type="entry name" value="PINc"/>
    <property type="match status" value="1"/>
</dbReference>
<dbReference type="SUPFAM" id="SSF88723">
    <property type="entry name" value="PIN domain-like"/>
    <property type="match status" value="1"/>
</dbReference>
<comment type="function">
    <text evidence="1">Essential protein involved in pre-rRNA processing and 40S ribosomal subunit assembly. Required for the early cleavage steps of 35S rRNA at the A(0), A(1), and A(2) sites.</text>
</comment>
<comment type="subunit">
    <text evidence="1">Interacts with FAF1.</text>
</comment>
<comment type="interaction">
    <interactant intactId="EBI-30765">
        <id>Q05498</id>
    </interactant>
    <interactant intactId="EBI-11168">
        <id>P47083</id>
        <label>MPP10</label>
    </interactant>
    <organismsDiffer>false</organismsDiffer>
    <experiments>2</experiments>
</comment>
<comment type="subcellular location">
    <subcellularLocation>
        <location evidence="1">Nucleus</location>
        <location evidence="1">Nucleolus</location>
    </subcellularLocation>
</comment>
<comment type="similarity">
    <text evidence="2">Belongs to the UTP23/FCF1 family. FCF1 subfamily.</text>
</comment>
<organism>
    <name type="scientific">Saccharomyces cerevisiae (strain ATCC 204508 / S288c)</name>
    <name type="common">Baker's yeast</name>
    <dbReference type="NCBI Taxonomy" id="559292"/>
    <lineage>
        <taxon>Eukaryota</taxon>
        <taxon>Fungi</taxon>
        <taxon>Dikarya</taxon>
        <taxon>Ascomycota</taxon>
        <taxon>Saccharomycotina</taxon>
        <taxon>Saccharomycetes</taxon>
        <taxon>Saccharomycetales</taxon>
        <taxon>Saccharomycetaceae</taxon>
        <taxon>Saccharomyces</taxon>
    </lineage>
</organism>
<accession>Q05498</accession>
<accession>D6VSX1</accession>
<proteinExistence type="evidence at protein level"/>
<gene>
    <name type="primary">FCF1</name>
    <name type="ordered locus">YDR339C</name>
    <name type="ORF">D9651.9</name>
</gene>
<feature type="chain" id="PRO_0000253818" description="rRNA-processing protein FCF1">
    <location>
        <begin position="1"/>
        <end position="189"/>
    </location>
</feature>
<feature type="domain" description="PINc">
    <location>
        <begin position="63"/>
        <end position="162"/>
    </location>
</feature>
<keyword id="KW-0002">3D-structure</keyword>
<keyword id="KW-0539">Nucleus</keyword>
<keyword id="KW-1185">Reference proteome</keyword>
<keyword id="KW-0690">Ribosome biogenesis</keyword>
<keyword id="KW-0698">rRNA processing</keyword>
<name>FCF1_YEAST</name>
<reference key="1">
    <citation type="journal article" date="1997" name="Nature">
        <title>The nucleotide sequence of Saccharomyces cerevisiae chromosome IV.</title>
        <authorList>
            <person name="Jacq C."/>
            <person name="Alt-Moerbe J."/>
            <person name="Andre B."/>
            <person name="Arnold W."/>
            <person name="Bahr A."/>
            <person name="Ballesta J.P.G."/>
            <person name="Bargues M."/>
            <person name="Baron L."/>
            <person name="Becker A."/>
            <person name="Biteau N."/>
            <person name="Bloecker H."/>
            <person name="Blugeon C."/>
            <person name="Boskovic J."/>
            <person name="Brandt P."/>
            <person name="Brueckner M."/>
            <person name="Buitrago M.J."/>
            <person name="Coster F."/>
            <person name="Delaveau T."/>
            <person name="del Rey F."/>
            <person name="Dujon B."/>
            <person name="Eide L.G."/>
            <person name="Garcia-Cantalejo J.M."/>
            <person name="Goffeau A."/>
            <person name="Gomez-Peris A."/>
            <person name="Granotier C."/>
            <person name="Hanemann V."/>
            <person name="Hankeln T."/>
            <person name="Hoheisel J.D."/>
            <person name="Jaeger W."/>
            <person name="Jimenez A."/>
            <person name="Jonniaux J.-L."/>
            <person name="Kraemer C."/>
            <person name="Kuester H."/>
            <person name="Laamanen P."/>
            <person name="Legros Y."/>
            <person name="Louis E.J."/>
            <person name="Moeller-Rieker S."/>
            <person name="Monnet A."/>
            <person name="Moro M."/>
            <person name="Mueller-Auer S."/>
            <person name="Nussbaumer B."/>
            <person name="Paricio N."/>
            <person name="Paulin L."/>
            <person name="Perea J."/>
            <person name="Perez-Alonso M."/>
            <person name="Perez-Ortin J.E."/>
            <person name="Pohl T.M."/>
            <person name="Prydz H."/>
            <person name="Purnelle B."/>
            <person name="Rasmussen S.W."/>
            <person name="Remacha M.A."/>
            <person name="Revuelta J.L."/>
            <person name="Rieger M."/>
            <person name="Salom D."/>
            <person name="Saluz H.P."/>
            <person name="Saiz J.E."/>
            <person name="Saren A.-M."/>
            <person name="Schaefer M."/>
            <person name="Scharfe M."/>
            <person name="Schmidt E.R."/>
            <person name="Schneider C."/>
            <person name="Scholler P."/>
            <person name="Schwarz S."/>
            <person name="Soler-Mira A."/>
            <person name="Urrestarazu L.A."/>
            <person name="Verhasselt P."/>
            <person name="Vissers S."/>
            <person name="Voet M."/>
            <person name="Volckaert G."/>
            <person name="Wagner G."/>
            <person name="Wambutt R."/>
            <person name="Wedler E."/>
            <person name="Wedler H."/>
            <person name="Woelfl S."/>
            <person name="Harris D.E."/>
            <person name="Bowman S."/>
            <person name="Brown D."/>
            <person name="Churcher C.M."/>
            <person name="Connor R."/>
            <person name="Dedman K."/>
            <person name="Gentles S."/>
            <person name="Hamlin N."/>
            <person name="Hunt S."/>
            <person name="Jones L."/>
            <person name="McDonald S."/>
            <person name="Murphy L.D."/>
            <person name="Niblett D."/>
            <person name="Odell C."/>
            <person name="Oliver K."/>
            <person name="Rajandream M.A."/>
            <person name="Richards C."/>
            <person name="Shore L."/>
            <person name="Walsh S.V."/>
            <person name="Barrell B.G."/>
            <person name="Dietrich F.S."/>
            <person name="Mulligan J.T."/>
            <person name="Allen E."/>
            <person name="Araujo R."/>
            <person name="Aviles E."/>
            <person name="Berno A."/>
            <person name="Carpenter J."/>
            <person name="Chen E."/>
            <person name="Cherry J.M."/>
            <person name="Chung E."/>
            <person name="Duncan M."/>
            <person name="Hunicke-Smith S."/>
            <person name="Hyman R.W."/>
            <person name="Komp C."/>
            <person name="Lashkari D."/>
            <person name="Lew H."/>
            <person name="Lin D."/>
            <person name="Mosedale D."/>
            <person name="Nakahara K."/>
            <person name="Namath A."/>
            <person name="Oefner P."/>
            <person name="Oh C."/>
            <person name="Petel F.X."/>
            <person name="Roberts D."/>
            <person name="Schramm S."/>
            <person name="Schroeder M."/>
            <person name="Shogren T."/>
            <person name="Shroff N."/>
            <person name="Winant A."/>
            <person name="Yelton M.A."/>
            <person name="Botstein D."/>
            <person name="Davis R.W."/>
            <person name="Johnston M."/>
            <person name="Andrews S."/>
            <person name="Brinkman R."/>
            <person name="Cooper J."/>
            <person name="Ding H."/>
            <person name="Du Z."/>
            <person name="Favello A."/>
            <person name="Fulton L."/>
            <person name="Gattung S."/>
            <person name="Greco T."/>
            <person name="Hallsworth K."/>
            <person name="Hawkins J."/>
            <person name="Hillier L.W."/>
            <person name="Jier M."/>
            <person name="Johnson D."/>
            <person name="Johnston L."/>
            <person name="Kirsten J."/>
            <person name="Kucaba T."/>
            <person name="Langston Y."/>
            <person name="Latreille P."/>
            <person name="Le T."/>
            <person name="Mardis E."/>
            <person name="Menezes S."/>
            <person name="Miller N."/>
            <person name="Nhan M."/>
            <person name="Pauley A."/>
            <person name="Peluso D."/>
            <person name="Rifkin L."/>
            <person name="Riles L."/>
            <person name="Taich A."/>
            <person name="Trevaskis E."/>
            <person name="Vignati D."/>
            <person name="Wilcox L."/>
            <person name="Wohldman P."/>
            <person name="Vaudin M."/>
            <person name="Wilson R."/>
            <person name="Waterston R."/>
            <person name="Albermann K."/>
            <person name="Hani J."/>
            <person name="Heumann K."/>
            <person name="Kleine K."/>
            <person name="Mewes H.-W."/>
            <person name="Zollner A."/>
            <person name="Zaccaria P."/>
        </authorList>
    </citation>
    <scope>NUCLEOTIDE SEQUENCE [LARGE SCALE GENOMIC DNA]</scope>
    <source>
        <strain>ATCC 204508 / S288c</strain>
    </source>
</reference>
<reference key="2">
    <citation type="journal article" date="2014" name="G3 (Bethesda)">
        <title>The reference genome sequence of Saccharomyces cerevisiae: Then and now.</title>
        <authorList>
            <person name="Engel S.R."/>
            <person name="Dietrich F.S."/>
            <person name="Fisk D.G."/>
            <person name="Binkley G."/>
            <person name="Balakrishnan R."/>
            <person name="Costanzo M.C."/>
            <person name="Dwight S.S."/>
            <person name="Hitz B.C."/>
            <person name="Karra K."/>
            <person name="Nash R.S."/>
            <person name="Weng S."/>
            <person name="Wong E.D."/>
            <person name="Lloyd P."/>
            <person name="Skrzypek M.S."/>
            <person name="Miyasato S.R."/>
            <person name="Simison M."/>
            <person name="Cherry J.M."/>
        </authorList>
    </citation>
    <scope>GENOME REANNOTATION</scope>
    <source>
        <strain>ATCC 204508 / S288c</strain>
    </source>
</reference>
<reference key="3">
    <citation type="journal article" date="2007" name="Genome Res.">
        <title>Approaching a complete repository of sequence-verified protein-encoding clones for Saccharomyces cerevisiae.</title>
        <authorList>
            <person name="Hu Y."/>
            <person name="Rolfs A."/>
            <person name="Bhullar B."/>
            <person name="Murthy T.V.S."/>
            <person name="Zhu C."/>
            <person name="Berger M.F."/>
            <person name="Camargo A.A."/>
            <person name="Kelley F."/>
            <person name="McCarron S."/>
            <person name="Jepson D."/>
            <person name="Richardson A."/>
            <person name="Raphael J."/>
            <person name="Moreira D."/>
            <person name="Taycher E."/>
            <person name="Zuo D."/>
            <person name="Mohr S."/>
            <person name="Kane M.F."/>
            <person name="Williamson J."/>
            <person name="Simpson A.J.G."/>
            <person name="Bulyk M.L."/>
            <person name="Harlow E."/>
            <person name="Marsischky G."/>
            <person name="Kolodner R.D."/>
            <person name="LaBaer J."/>
        </authorList>
    </citation>
    <scope>NUCLEOTIDE SEQUENCE [GENOMIC DNA]</scope>
    <source>
        <strain>ATCC 204508 / S288c</strain>
    </source>
</reference>
<reference key="4">
    <citation type="journal article" date="2006" name="Biochem. Biophys. Res. Commun.">
        <title>Fcf1p and Fcf2p are novel nucleolar Saccharomyces cerevisiae proteins involved in pre-rRNA processing.</title>
        <authorList>
            <person name="Rempola B."/>
            <person name="Karkusiewicz I."/>
            <person name="Piekarska I."/>
            <person name="Rytka J."/>
        </authorList>
    </citation>
    <scope>FUNCTION</scope>
    <scope>SUBCELLULAR LOCATION</scope>
    <scope>INTERACTION WITH FAF1</scope>
</reference>
<evidence type="ECO:0000269" key="1">
    <source>
    </source>
</evidence>
<evidence type="ECO:0000305" key="2"/>